<name>PETG_CHAGL</name>
<sequence>MVEPLLSGIVLGLIPITLAGLFVTAYLQYRRGDQLDF</sequence>
<proteinExistence type="inferred from homology"/>
<feature type="chain" id="PRO_0000216374" description="Cytochrome b6-f complex subunit 5">
    <location>
        <begin position="1"/>
        <end position="37"/>
    </location>
</feature>
<feature type="transmembrane region" description="Helical" evidence="1">
    <location>
        <begin position="5"/>
        <end position="25"/>
    </location>
</feature>
<accession>Q8M9Y4</accession>
<dbReference type="EMBL" id="AF494278">
    <property type="protein sequence ID" value="AAM96529.1"/>
    <property type="molecule type" value="Genomic_DNA"/>
</dbReference>
<dbReference type="RefSeq" id="NP_683802.1">
    <property type="nucleotide sequence ID" value="NC_004115.1"/>
</dbReference>
<dbReference type="SMR" id="Q8M9Y4"/>
<dbReference type="GeneID" id="860685"/>
<dbReference type="GO" id="GO:0009535">
    <property type="term" value="C:chloroplast thylakoid membrane"/>
    <property type="evidence" value="ECO:0007669"/>
    <property type="project" value="UniProtKB-SubCell"/>
</dbReference>
<dbReference type="GO" id="GO:0009512">
    <property type="term" value="C:cytochrome b6f complex"/>
    <property type="evidence" value="ECO:0007669"/>
    <property type="project" value="InterPro"/>
</dbReference>
<dbReference type="GO" id="GO:0045158">
    <property type="term" value="F:electron transporter, transferring electrons within cytochrome b6/f complex of photosystem II activity"/>
    <property type="evidence" value="ECO:0007669"/>
    <property type="project" value="UniProtKB-UniRule"/>
</dbReference>
<dbReference type="GO" id="GO:0017004">
    <property type="term" value="P:cytochrome complex assembly"/>
    <property type="evidence" value="ECO:0007669"/>
    <property type="project" value="UniProtKB-UniRule"/>
</dbReference>
<dbReference type="GO" id="GO:0015979">
    <property type="term" value="P:photosynthesis"/>
    <property type="evidence" value="ECO:0007669"/>
    <property type="project" value="UniProtKB-KW"/>
</dbReference>
<dbReference type="HAMAP" id="MF_00432">
    <property type="entry name" value="Cytb6_f_PetG"/>
    <property type="match status" value="1"/>
</dbReference>
<dbReference type="InterPro" id="IPR003683">
    <property type="entry name" value="Cyt_6/f_cplx_su5"/>
</dbReference>
<dbReference type="InterPro" id="IPR036099">
    <property type="entry name" value="Cyt_6/f_cplx_su5_sf"/>
</dbReference>
<dbReference type="NCBIfam" id="NF001907">
    <property type="entry name" value="PRK00665.1"/>
    <property type="match status" value="1"/>
</dbReference>
<dbReference type="Pfam" id="PF02529">
    <property type="entry name" value="PetG"/>
    <property type="match status" value="1"/>
</dbReference>
<dbReference type="PIRSF" id="PIRSF000034">
    <property type="entry name" value="Cyt_b6-f_V"/>
    <property type="match status" value="1"/>
</dbReference>
<dbReference type="SUPFAM" id="SSF103446">
    <property type="entry name" value="PetG subunit of the cytochrome b6f complex"/>
    <property type="match status" value="1"/>
</dbReference>
<gene>
    <name evidence="1" type="primary">petG</name>
</gene>
<comment type="function">
    <text evidence="1">Component of the cytochrome b6-f complex, which mediates electron transfer between photosystem II (PSII) and photosystem I (PSI), cyclic electron flow around PSI, and state transitions. PetG is required for either the stability or assembly of the cytochrome b6-f complex.</text>
</comment>
<comment type="subunit">
    <text evidence="1">The 4 large subunits of the cytochrome b6-f complex are cytochrome b6, subunit IV (17 kDa polypeptide, PetD), cytochrome f and the Rieske protein, while the 4 small subunits are PetG, PetL, PetM and PetN. The complex functions as a dimer.</text>
</comment>
<comment type="subcellular location">
    <subcellularLocation>
        <location evidence="1">Plastid</location>
        <location evidence="1">Chloroplast thylakoid membrane</location>
        <topology evidence="1">Single-pass membrane protein</topology>
    </subcellularLocation>
</comment>
<comment type="similarity">
    <text evidence="1">Belongs to the PetG family.</text>
</comment>
<keyword id="KW-0150">Chloroplast</keyword>
<keyword id="KW-0249">Electron transport</keyword>
<keyword id="KW-0472">Membrane</keyword>
<keyword id="KW-0602">Photosynthesis</keyword>
<keyword id="KW-0934">Plastid</keyword>
<keyword id="KW-0793">Thylakoid</keyword>
<keyword id="KW-0812">Transmembrane</keyword>
<keyword id="KW-1133">Transmembrane helix</keyword>
<keyword id="KW-0813">Transport</keyword>
<protein>
    <recommendedName>
        <fullName evidence="1">Cytochrome b6-f complex subunit 5</fullName>
    </recommendedName>
    <alternativeName>
        <fullName evidence="1">Cytochrome b6-f complex subunit PetG</fullName>
    </alternativeName>
    <alternativeName>
        <fullName evidence="1">Cytochrome b6-f complex subunit V</fullName>
    </alternativeName>
</protein>
<organism>
    <name type="scientific">Chaetosphaeridium globosum</name>
    <name type="common">Charophycean green alga</name>
    <name type="synonym">Herposteiron globosum</name>
    <dbReference type="NCBI Taxonomy" id="96477"/>
    <lineage>
        <taxon>Eukaryota</taxon>
        <taxon>Viridiplantae</taxon>
        <taxon>Streptophyta</taxon>
        <taxon>Coleochaetophyceae</taxon>
        <taxon>Coleochaetales</taxon>
        <taxon>Chaetosphaeridiaceae</taxon>
        <taxon>Chaetosphaeridium</taxon>
    </lineage>
</organism>
<evidence type="ECO:0000255" key="1">
    <source>
        <dbReference type="HAMAP-Rule" id="MF_00432"/>
    </source>
</evidence>
<reference key="1">
    <citation type="journal article" date="2002" name="Proc. Natl. Acad. Sci. U.S.A.">
        <title>The chloroplast and mitochondrial genome sequences of the charophyte Chaetosphaeridium globosum: insights into the timing of the events that restructured organelle DNAs within the green algal lineage that led to land plants.</title>
        <authorList>
            <person name="Turmel M."/>
            <person name="Otis C."/>
            <person name="Lemieux C."/>
        </authorList>
    </citation>
    <scope>NUCLEOTIDE SEQUENCE [LARGE SCALE GENOMIC DNA]</scope>
    <source>
        <strain>M1311</strain>
    </source>
</reference>
<geneLocation type="chloroplast"/>